<evidence type="ECO:0000255" key="1">
    <source>
        <dbReference type="HAMAP-Rule" id="MF_00158"/>
    </source>
</evidence>
<protein>
    <recommendedName>
        <fullName evidence="1">Pantothenate synthetase</fullName>
        <shortName evidence="1">PS</shortName>
        <ecNumber evidence="1">6.3.2.1</ecNumber>
    </recommendedName>
    <alternativeName>
        <fullName evidence="1">Pantoate--beta-alanine ligase</fullName>
    </alternativeName>
    <alternativeName>
        <fullName evidence="1">Pantoate-activating enzyme</fullName>
    </alternativeName>
</protein>
<keyword id="KW-0067">ATP-binding</keyword>
<keyword id="KW-0963">Cytoplasm</keyword>
<keyword id="KW-0436">Ligase</keyword>
<keyword id="KW-0547">Nucleotide-binding</keyword>
<keyword id="KW-0566">Pantothenate biosynthesis</keyword>
<keyword id="KW-1185">Reference proteome</keyword>
<accession>Q729A4</accession>
<gene>
    <name evidence="1" type="primary">panC</name>
    <name type="ordered locus">DVU_2448</name>
</gene>
<comment type="function">
    <text evidence="1">Catalyzes the condensation of pantoate with beta-alanine in an ATP-dependent reaction via a pantoyl-adenylate intermediate.</text>
</comment>
<comment type="catalytic activity">
    <reaction evidence="1">
        <text>(R)-pantoate + beta-alanine + ATP = (R)-pantothenate + AMP + diphosphate + H(+)</text>
        <dbReference type="Rhea" id="RHEA:10912"/>
        <dbReference type="ChEBI" id="CHEBI:15378"/>
        <dbReference type="ChEBI" id="CHEBI:15980"/>
        <dbReference type="ChEBI" id="CHEBI:29032"/>
        <dbReference type="ChEBI" id="CHEBI:30616"/>
        <dbReference type="ChEBI" id="CHEBI:33019"/>
        <dbReference type="ChEBI" id="CHEBI:57966"/>
        <dbReference type="ChEBI" id="CHEBI:456215"/>
        <dbReference type="EC" id="6.3.2.1"/>
    </reaction>
</comment>
<comment type="pathway">
    <text evidence="1">Cofactor biosynthesis; (R)-pantothenate biosynthesis; (R)-pantothenate from (R)-pantoate and beta-alanine: step 1/1.</text>
</comment>
<comment type="subunit">
    <text evidence="1">Homodimer.</text>
</comment>
<comment type="subcellular location">
    <subcellularLocation>
        <location evidence="1">Cytoplasm</location>
    </subcellularLocation>
</comment>
<comment type="miscellaneous">
    <text evidence="1">The reaction proceeds by a bi uni uni bi ping pong mechanism.</text>
</comment>
<comment type="similarity">
    <text evidence="1">Belongs to the pantothenate synthetase family.</text>
</comment>
<reference key="1">
    <citation type="journal article" date="2004" name="Nat. Biotechnol.">
        <title>The genome sequence of the anaerobic, sulfate-reducing bacterium Desulfovibrio vulgaris Hildenborough.</title>
        <authorList>
            <person name="Heidelberg J.F."/>
            <person name="Seshadri R."/>
            <person name="Haveman S.A."/>
            <person name="Hemme C.L."/>
            <person name="Paulsen I.T."/>
            <person name="Kolonay J.F."/>
            <person name="Eisen J.A."/>
            <person name="Ward N.L."/>
            <person name="Methe B.A."/>
            <person name="Brinkac L.M."/>
            <person name="Daugherty S.C."/>
            <person name="DeBoy R.T."/>
            <person name="Dodson R.J."/>
            <person name="Durkin A.S."/>
            <person name="Madupu R."/>
            <person name="Nelson W.C."/>
            <person name="Sullivan S.A."/>
            <person name="Fouts D.E."/>
            <person name="Haft D.H."/>
            <person name="Selengut J."/>
            <person name="Peterson J.D."/>
            <person name="Davidsen T.M."/>
            <person name="Zafar N."/>
            <person name="Zhou L."/>
            <person name="Radune D."/>
            <person name="Dimitrov G."/>
            <person name="Hance M."/>
            <person name="Tran K."/>
            <person name="Khouri H.M."/>
            <person name="Gill J."/>
            <person name="Utterback T.R."/>
            <person name="Feldblyum T.V."/>
            <person name="Wall J.D."/>
            <person name="Voordouw G."/>
            <person name="Fraser C.M."/>
        </authorList>
    </citation>
    <scope>NUCLEOTIDE SEQUENCE [LARGE SCALE GENOMIC DNA]</scope>
    <source>
        <strain>ATCC 29579 / DSM 644 / CCUG 34227 / NCIMB 8303 / VKM B-1760 / Hildenborough</strain>
    </source>
</reference>
<sequence>MQIITEPQTIQQACLRWRADGVHTALVPTMGYYHAGHESLMAHARAVSEKVIVSLFVNPAQFGPGEDFAAYPRDLERDAAMAEAQGVDVLFAPKAEDLYKKDHATWVEVPALSQTMCGLSRPTHFRGVCTVVTKLLMLTMPRIAVFGQKDWQQVAVIRRMVRDLNIPVDIVGRPIVREPDGLAMSSRNIYLTAEERLQAPHIHHGLALGRAITQSGERDAETIKTAIRRYWAQNLPGGEEDYLTIVDPVSLEPVDRLTGATLCATAVRVGQARLLDNMMLLGD</sequence>
<dbReference type="EC" id="6.3.2.1" evidence="1"/>
<dbReference type="EMBL" id="AE017285">
    <property type="protein sequence ID" value="AAS96920.1"/>
    <property type="molecule type" value="Genomic_DNA"/>
</dbReference>
<dbReference type="RefSeq" id="WP_010939719.1">
    <property type="nucleotide sequence ID" value="NC_002937.3"/>
</dbReference>
<dbReference type="RefSeq" id="YP_011660.1">
    <property type="nucleotide sequence ID" value="NC_002937.3"/>
</dbReference>
<dbReference type="SMR" id="Q729A4"/>
<dbReference type="STRING" id="882.DVU_2448"/>
<dbReference type="PaxDb" id="882-DVU_2448"/>
<dbReference type="EnsemblBacteria" id="AAS96920">
    <property type="protein sequence ID" value="AAS96920"/>
    <property type="gene ID" value="DVU_2448"/>
</dbReference>
<dbReference type="KEGG" id="dvu:DVU_2448"/>
<dbReference type="PATRIC" id="fig|882.5.peg.2217"/>
<dbReference type="eggNOG" id="COG0414">
    <property type="taxonomic scope" value="Bacteria"/>
</dbReference>
<dbReference type="HOGENOM" id="CLU_047148_0_0_7"/>
<dbReference type="OrthoDB" id="9773087at2"/>
<dbReference type="PhylomeDB" id="Q729A4"/>
<dbReference type="UniPathway" id="UPA00028">
    <property type="reaction ID" value="UER00005"/>
</dbReference>
<dbReference type="Proteomes" id="UP000002194">
    <property type="component" value="Chromosome"/>
</dbReference>
<dbReference type="GO" id="GO:0005829">
    <property type="term" value="C:cytosol"/>
    <property type="evidence" value="ECO:0007669"/>
    <property type="project" value="TreeGrafter"/>
</dbReference>
<dbReference type="GO" id="GO:0005524">
    <property type="term" value="F:ATP binding"/>
    <property type="evidence" value="ECO:0007669"/>
    <property type="project" value="UniProtKB-KW"/>
</dbReference>
<dbReference type="GO" id="GO:0004592">
    <property type="term" value="F:pantoate-beta-alanine ligase activity"/>
    <property type="evidence" value="ECO:0007669"/>
    <property type="project" value="UniProtKB-UniRule"/>
</dbReference>
<dbReference type="GO" id="GO:0015940">
    <property type="term" value="P:pantothenate biosynthetic process"/>
    <property type="evidence" value="ECO:0007669"/>
    <property type="project" value="UniProtKB-UniRule"/>
</dbReference>
<dbReference type="CDD" id="cd00560">
    <property type="entry name" value="PanC"/>
    <property type="match status" value="1"/>
</dbReference>
<dbReference type="Gene3D" id="3.40.50.620">
    <property type="entry name" value="HUPs"/>
    <property type="match status" value="1"/>
</dbReference>
<dbReference type="Gene3D" id="3.30.1300.10">
    <property type="entry name" value="Pantoate-beta-alanine ligase, C-terminal domain"/>
    <property type="match status" value="1"/>
</dbReference>
<dbReference type="HAMAP" id="MF_00158">
    <property type="entry name" value="PanC"/>
    <property type="match status" value="1"/>
</dbReference>
<dbReference type="InterPro" id="IPR003721">
    <property type="entry name" value="Pantoate_ligase"/>
</dbReference>
<dbReference type="InterPro" id="IPR042176">
    <property type="entry name" value="Pantoate_ligase_C"/>
</dbReference>
<dbReference type="InterPro" id="IPR014729">
    <property type="entry name" value="Rossmann-like_a/b/a_fold"/>
</dbReference>
<dbReference type="NCBIfam" id="TIGR00018">
    <property type="entry name" value="panC"/>
    <property type="match status" value="1"/>
</dbReference>
<dbReference type="PANTHER" id="PTHR21299">
    <property type="entry name" value="CYTIDYLATE KINASE/PANTOATE-BETA-ALANINE LIGASE"/>
    <property type="match status" value="1"/>
</dbReference>
<dbReference type="PANTHER" id="PTHR21299:SF1">
    <property type="entry name" value="PANTOATE--BETA-ALANINE LIGASE"/>
    <property type="match status" value="1"/>
</dbReference>
<dbReference type="Pfam" id="PF02569">
    <property type="entry name" value="Pantoate_ligase"/>
    <property type="match status" value="1"/>
</dbReference>
<dbReference type="SUPFAM" id="SSF52374">
    <property type="entry name" value="Nucleotidylyl transferase"/>
    <property type="match status" value="1"/>
</dbReference>
<feature type="chain" id="PRO_0000128226" description="Pantothenate synthetase">
    <location>
        <begin position="1"/>
        <end position="283"/>
    </location>
</feature>
<feature type="active site" description="Proton donor" evidence="1">
    <location>
        <position position="37"/>
    </location>
</feature>
<feature type="binding site" evidence="1">
    <location>
        <begin position="30"/>
        <end position="37"/>
    </location>
    <ligand>
        <name>ATP</name>
        <dbReference type="ChEBI" id="CHEBI:30616"/>
    </ligand>
</feature>
<feature type="binding site" evidence="1">
    <location>
        <position position="61"/>
    </location>
    <ligand>
        <name>(R)-pantoate</name>
        <dbReference type="ChEBI" id="CHEBI:15980"/>
    </ligand>
</feature>
<feature type="binding site" evidence="1">
    <location>
        <position position="61"/>
    </location>
    <ligand>
        <name>beta-alanine</name>
        <dbReference type="ChEBI" id="CHEBI:57966"/>
    </ligand>
</feature>
<feature type="binding site" evidence="1">
    <location>
        <begin position="147"/>
        <end position="150"/>
    </location>
    <ligand>
        <name>ATP</name>
        <dbReference type="ChEBI" id="CHEBI:30616"/>
    </ligand>
</feature>
<feature type="binding site" evidence="1">
    <location>
        <position position="153"/>
    </location>
    <ligand>
        <name>(R)-pantoate</name>
        <dbReference type="ChEBI" id="CHEBI:15980"/>
    </ligand>
</feature>
<feature type="binding site" evidence="1">
    <location>
        <position position="176"/>
    </location>
    <ligand>
        <name>ATP</name>
        <dbReference type="ChEBI" id="CHEBI:30616"/>
    </ligand>
</feature>
<feature type="binding site" evidence="1">
    <location>
        <begin position="184"/>
        <end position="187"/>
    </location>
    <ligand>
        <name>ATP</name>
        <dbReference type="ChEBI" id="CHEBI:30616"/>
    </ligand>
</feature>
<proteinExistence type="inferred from homology"/>
<organism>
    <name type="scientific">Nitratidesulfovibrio vulgaris (strain ATCC 29579 / DSM 644 / CCUG 34227 / NCIMB 8303 / VKM B-1760 / Hildenborough)</name>
    <name type="common">Desulfovibrio vulgaris</name>
    <dbReference type="NCBI Taxonomy" id="882"/>
    <lineage>
        <taxon>Bacteria</taxon>
        <taxon>Pseudomonadati</taxon>
        <taxon>Thermodesulfobacteriota</taxon>
        <taxon>Desulfovibrionia</taxon>
        <taxon>Desulfovibrionales</taxon>
        <taxon>Desulfovibrionaceae</taxon>
        <taxon>Nitratidesulfovibrio</taxon>
    </lineage>
</organism>
<name>PANC_NITV2</name>